<accession>P32040</accession>
<accession>B1XII4</accession>
<feature type="chain" id="PRO_0000081358" description="Probable transcriptional regulatory protein SYNPCC7002_A0851">
    <location>
        <begin position="1"/>
        <end position="251"/>
    </location>
</feature>
<feature type="domain" description="Response regulatory" evidence="2">
    <location>
        <begin position="20"/>
        <end position="141"/>
    </location>
</feature>
<feature type="DNA-binding region" description="OmpR/PhoB-type" evidence="3">
    <location>
        <begin position="153"/>
        <end position="251"/>
    </location>
</feature>
<feature type="modified residue" description="4-aspartylphosphate" evidence="2">
    <location>
        <position position="76"/>
    </location>
</feature>
<feature type="sequence conflict" description="In Ref. 2; AAA27325." evidence="4" ref="2">
    <original>N</original>
    <variation>H</variation>
    <location>
        <position position="56"/>
    </location>
</feature>
<comment type="PTM">
    <text evidence="1">Phosphorylation.</text>
</comment>
<gene>
    <name type="ordered locus">SYNPCC7002_A0851</name>
</gene>
<keyword id="KW-0238">DNA-binding</keyword>
<keyword id="KW-0597">Phosphoprotein</keyword>
<keyword id="KW-1185">Reference proteome</keyword>
<keyword id="KW-0902">Two-component regulatory system</keyword>
<sequence length="251" mass="28963">MLSLDLMSHTLDAELSTKARILVVEDEAVIRDMIVMGLEEEGYEVFFADNGRTGLNMLQNPEFNAPDMPLDLVILDIMLPEVNGLDLCRFLRYQGNTIPILVLSAKASETDRVLGLEVGADDYLTKPFSLRELVARCRALLRRQQFIRSTPKNSVRQFKDISLFPEECRVTVRGEEVSLSPKEYRLLELFMSYPRRVWSRDQLIEQVWGADFLGDTKTVDVHIRWLREKLELDPSQPEYLITVRGFGYRFG</sequence>
<name>Y851_PICP2</name>
<protein>
    <recommendedName>
        <fullName>Probable transcriptional regulatory protein SYNPCC7002_A0851</fullName>
    </recommendedName>
</protein>
<dbReference type="EMBL" id="CP000951">
    <property type="protein sequence ID" value="ACA98855.1"/>
    <property type="molecule type" value="Genomic_DNA"/>
</dbReference>
<dbReference type="EMBL" id="M86234">
    <property type="protein sequence ID" value="AAA27325.1"/>
    <property type="molecule type" value="Genomic_DNA"/>
</dbReference>
<dbReference type="RefSeq" id="WP_012306479.1">
    <property type="nucleotide sequence ID" value="NZ_JAHHPU010000001.1"/>
</dbReference>
<dbReference type="SMR" id="P32040"/>
<dbReference type="STRING" id="32049.SYNPCC7002_A0851"/>
<dbReference type="KEGG" id="syp:SYNPCC7002_A0851"/>
<dbReference type="eggNOG" id="COG0745">
    <property type="taxonomic scope" value="Bacteria"/>
</dbReference>
<dbReference type="HOGENOM" id="CLU_000445_30_4_3"/>
<dbReference type="Proteomes" id="UP000001688">
    <property type="component" value="Chromosome"/>
</dbReference>
<dbReference type="GO" id="GO:0005829">
    <property type="term" value="C:cytosol"/>
    <property type="evidence" value="ECO:0007669"/>
    <property type="project" value="TreeGrafter"/>
</dbReference>
<dbReference type="GO" id="GO:0032993">
    <property type="term" value="C:protein-DNA complex"/>
    <property type="evidence" value="ECO:0007669"/>
    <property type="project" value="TreeGrafter"/>
</dbReference>
<dbReference type="GO" id="GO:0000156">
    <property type="term" value="F:phosphorelay response regulator activity"/>
    <property type="evidence" value="ECO:0007669"/>
    <property type="project" value="TreeGrafter"/>
</dbReference>
<dbReference type="GO" id="GO:0000976">
    <property type="term" value="F:transcription cis-regulatory region binding"/>
    <property type="evidence" value="ECO:0007669"/>
    <property type="project" value="TreeGrafter"/>
</dbReference>
<dbReference type="GO" id="GO:0006355">
    <property type="term" value="P:regulation of DNA-templated transcription"/>
    <property type="evidence" value="ECO:0007669"/>
    <property type="project" value="InterPro"/>
</dbReference>
<dbReference type="CDD" id="cd17574">
    <property type="entry name" value="REC_OmpR"/>
    <property type="match status" value="1"/>
</dbReference>
<dbReference type="CDD" id="cd00383">
    <property type="entry name" value="trans_reg_C"/>
    <property type="match status" value="1"/>
</dbReference>
<dbReference type="FunFam" id="1.10.10.10:FF:000018">
    <property type="entry name" value="DNA-binding response regulator ResD"/>
    <property type="match status" value="1"/>
</dbReference>
<dbReference type="Gene3D" id="3.40.50.2300">
    <property type="match status" value="1"/>
</dbReference>
<dbReference type="Gene3D" id="6.10.250.690">
    <property type="match status" value="1"/>
</dbReference>
<dbReference type="Gene3D" id="1.10.10.10">
    <property type="entry name" value="Winged helix-like DNA-binding domain superfamily/Winged helix DNA-binding domain"/>
    <property type="match status" value="1"/>
</dbReference>
<dbReference type="InterPro" id="IPR011006">
    <property type="entry name" value="CheY-like_superfamily"/>
</dbReference>
<dbReference type="InterPro" id="IPR001867">
    <property type="entry name" value="OmpR/PhoB-type_DNA-bd"/>
</dbReference>
<dbReference type="InterPro" id="IPR016032">
    <property type="entry name" value="Sig_transdc_resp-reg_C-effctor"/>
</dbReference>
<dbReference type="InterPro" id="IPR001789">
    <property type="entry name" value="Sig_transdc_resp-reg_receiver"/>
</dbReference>
<dbReference type="InterPro" id="IPR039420">
    <property type="entry name" value="WalR-like"/>
</dbReference>
<dbReference type="InterPro" id="IPR036388">
    <property type="entry name" value="WH-like_DNA-bd_sf"/>
</dbReference>
<dbReference type="PANTHER" id="PTHR48111:SF40">
    <property type="entry name" value="PHOSPHATE REGULON TRANSCRIPTIONAL REGULATORY PROTEIN PHOB"/>
    <property type="match status" value="1"/>
</dbReference>
<dbReference type="PANTHER" id="PTHR48111">
    <property type="entry name" value="REGULATOR OF RPOS"/>
    <property type="match status" value="1"/>
</dbReference>
<dbReference type="Pfam" id="PF00072">
    <property type="entry name" value="Response_reg"/>
    <property type="match status" value="1"/>
</dbReference>
<dbReference type="Pfam" id="PF00486">
    <property type="entry name" value="Trans_reg_C"/>
    <property type="match status" value="1"/>
</dbReference>
<dbReference type="SMART" id="SM00448">
    <property type="entry name" value="REC"/>
    <property type="match status" value="1"/>
</dbReference>
<dbReference type="SMART" id="SM00862">
    <property type="entry name" value="Trans_reg_C"/>
    <property type="match status" value="1"/>
</dbReference>
<dbReference type="SUPFAM" id="SSF46894">
    <property type="entry name" value="C-terminal effector domain of the bipartite response regulators"/>
    <property type="match status" value="1"/>
</dbReference>
<dbReference type="SUPFAM" id="SSF52172">
    <property type="entry name" value="CheY-like"/>
    <property type="match status" value="1"/>
</dbReference>
<dbReference type="PROSITE" id="PS51755">
    <property type="entry name" value="OMPR_PHOB"/>
    <property type="match status" value="1"/>
</dbReference>
<dbReference type="PROSITE" id="PS50110">
    <property type="entry name" value="RESPONSE_REGULATORY"/>
    <property type="match status" value="1"/>
</dbReference>
<organism>
    <name type="scientific">Picosynechococcus sp. (strain ATCC 27264 / PCC 7002 / PR-6)</name>
    <name type="common">Agmenellum quadruplicatum</name>
    <dbReference type="NCBI Taxonomy" id="32049"/>
    <lineage>
        <taxon>Bacteria</taxon>
        <taxon>Bacillati</taxon>
        <taxon>Cyanobacteriota</taxon>
        <taxon>Cyanophyceae</taxon>
        <taxon>Oscillatoriophycideae</taxon>
        <taxon>Chroococcales</taxon>
        <taxon>Geminocystaceae</taxon>
        <taxon>Picosynechococcus</taxon>
    </lineage>
</organism>
<evidence type="ECO:0000250" key="1"/>
<evidence type="ECO:0000255" key="2">
    <source>
        <dbReference type="PROSITE-ProRule" id="PRU00169"/>
    </source>
</evidence>
<evidence type="ECO:0000255" key="3">
    <source>
        <dbReference type="PROSITE-ProRule" id="PRU01091"/>
    </source>
</evidence>
<evidence type="ECO:0000305" key="4"/>
<reference key="1">
    <citation type="submission" date="2008-02" db="EMBL/GenBank/DDBJ databases">
        <title>Complete sequence of Synechococcus sp. PCC 7002.</title>
        <authorList>
            <person name="Li T."/>
            <person name="Zhao J."/>
            <person name="Zhao C."/>
            <person name="Liu Z."/>
            <person name="Zhao F."/>
            <person name="Marquardt J."/>
            <person name="Nomura C.T."/>
            <person name="Persson S."/>
            <person name="Detter J.C."/>
            <person name="Richardson P.M."/>
            <person name="Lanz C."/>
            <person name="Schuster S.C."/>
            <person name="Wang J."/>
            <person name="Li S."/>
            <person name="Huang X."/>
            <person name="Cai T."/>
            <person name="Yu Z."/>
            <person name="Luo J."/>
            <person name="Zhao J."/>
            <person name="Bryant D.A."/>
        </authorList>
    </citation>
    <scope>NUCLEOTIDE SEQUENCE [LARGE SCALE GENOMIC DNA]</scope>
    <source>
        <strain>ATCC 27264 / PCC 7002 / PR-6</strain>
    </source>
</reference>
<reference key="2">
    <citation type="journal article" date="1992" name="Biochemistry">
        <title>Molecular characterization of ferredoxin-NADP+ oxidoreductase in cyanobacteria: cloning and sequence of the petH gene of Synechococcus sp. PCC 7002 and studies on the gene product.</title>
        <authorList>
            <person name="Schluchter W.M."/>
            <person name="Bryant D.A."/>
        </authorList>
    </citation>
    <scope>NUCLEOTIDE SEQUENCE [GENOMIC DNA] OF 1-63</scope>
</reference>
<proteinExistence type="inferred from homology"/>